<keyword id="KW-0963">Cytoplasm</keyword>
<keyword id="KW-0664">Pyridoxine biosynthesis</keyword>
<keyword id="KW-1185">Reference proteome</keyword>
<keyword id="KW-0808">Transferase</keyword>
<protein>
    <recommendedName>
        <fullName evidence="1">Pyridoxine 5'-phosphate synthase</fullName>
        <shortName evidence="1">PNP synthase</shortName>
        <ecNumber evidence="1">2.6.99.2</ecNumber>
    </recommendedName>
</protein>
<comment type="function">
    <text evidence="1">Catalyzes the complicated ring closure reaction between the two acyclic compounds 1-deoxy-D-xylulose-5-phosphate (DXP) and 3-amino-2-oxopropyl phosphate (1-amino-acetone-3-phosphate or AAP) to form pyridoxine 5'-phosphate (PNP) and inorganic phosphate.</text>
</comment>
<comment type="catalytic activity">
    <reaction evidence="1">
        <text>3-amino-2-oxopropyl phosphate + 1-deoxy-D-xylulose 5-phosphate = pyridoxine 5'-phosphate + phosphate + 2 H2O + H(+)</text>
        <dbReference type="Rhea" id="RHEA:15265"/>
        <dbReference type="ChEBI" id="CHEBI:15377"/>
        <dbReference type="ChEBI" id="CHEBI:15378"/>
        <dbReference type="ChEBI" id="CHEBI:43474"/>
        <dbReference type="ChEBI" id="CHEBI:57279"/>
        <dbReference type="ChEBI" id="CHEBI:57792"/>
        <dbReference type="ChEBI" id="CHEBI:58589"/>
        <dbReference type="EC" id="2.6.99.2"/>
    </reaction>
</comment>
<comment type="pathway">
    <text evidence="1">Cofactor biosynthesis; pyridoxine 5'-phosphate biosynthesis; pyridoxine 5'-phosphate from D-erythrose 4-phosphate: step 5/5.</text>
</comment>
<comment type="subunit">
    <text evidence="1">Homooctamer; tetramer of dimers.</text>
</comment>
<comment type="subcellular location">
    <subcellularLocation>
        <location evidence="1">Cytoplasm</location>
    </subcellularLocation>
</comment>
<comment type="similarity">
    <text evidence="1">Belongs to the PNP synthase family.</text>
</comment>
<accession>B0C977</accession>
<reference key="1">
    <citation type="journal article" date="2008" name="Proc. Natl. Acad. Sci. U.S.A.">
        <title>Niche adaptation and genome expansion in the chlorophyll d-producing cyanobacterium Acaryochloris marina.</title>
        <authorList>
            <person name="Swingley W.D."/>
            <person name="Chen M."/>
            <person name="Cheung P.C."/>
            <person name="Conrad A.L."/>
            <person name="Dejesa L.C."/>
            <person name="Hao J."/>
            <person name="Honchak B.M."/>
            <person name="Karbach L.E."/>
            <person name="Kurdoglu A."/>
            <person name="Lahiri S."/>
            <person name="Mastrian S.D."/>
            <person name="Miyashita H."/>
            <person name="Page L."/>
            <person name="Ramakrishna P."/>
            <person name="Satoh S."/>
            <person name="Sattley W.M."/>
            <person name="Shimada Y."/>
            <person name="Taylor H.L."/>
            <person name="Tomo T."/>
            <person name="Tsuchiya T."/>
            <person name="Wang Z.T."/>
            <person name="Raymond J."/>
            <person name="Mimuro M."/>
            <person name="Blankenship R.E."/>
            <person name="Touchman J.W."/>
        </authorList>
    </citation>
    <scope>NUCLEOTIDE SEQUENCE [LARGE SCALE GENOMIC DNA]</scope>
    <source>
        <strain>MBIC 11017</strain>
    </source>
</reference>
<dbReference type="EC" id="2.6.99.2" evidence="1"/>
<dbReference type="EMBL" id="CP000828">
    <property type="protein sequence ID" value="ABW27758.1"/>
    <property type="molecule type" value="Genomic_DNA"/>
</dbReference>
<dbReference type="RefSeq" id="WP_012163205.1">
    <property type="nucleotide sequence ID" value="NC_009925.1"/>
</dbReference>
<dbReference type="SMR" id="B0C977"/>
<dbReference type="STRING" id="329726.AM1_2758"/>
<dbReference type="KEGG" id="amr:AM1_2758"/>
<dbReference type="eggNOG" id="COG0854">
    <property type="taxonomic scope" value="Bacteria"/>
</dbReference>
<dbReference type="HOGENOM" id="CLU_074563_0_0_3"/>
<dbReference type="OrthoDB" id="9806590at2"/>
<dbReference type="UniPathway" id="UPA00244">
    <property type="reaction ID" value="UER00313"/>
</dbReference>
<dbReference type="Proteomes" id="UP000000268">
    <property type="component" value="Chromosome"/>
</dbReference>
<dbReference type="GO" id="GO:0005829">
    <property type="term" value="C:cytosol"/>
    <property type="evidence" value="ECO:0007669"/>
    <property type="project" value="TreeGrafter"/>
</dbReference>
<dbReference type="GO" id="GO:0033856">
    <property type="term" value="F:pyridoxine 5'-phosphate synthase activity"/>
    <property type="evidence" value="ECO:0007669"/>
    <property type="project" value="UniProtKB-EC"/>
</dbReference>
<dbReference type="GO" id="GO:0008615">
    <property type="term" value="P:pyridoxine biosynthetic process"/>
    <property type="evidence" value="ECO:0007669"/>
    <property type="project" value="UniProtKB-UniRule"/>
</dbReference>
<dbReference type="CDD" id="cd00003">
    <property type="entry name" value="PNPsynthase"/>
    <property type="match status" value="1"/>
</dbReference>
<dbReference type="Gene3D" id="3.20.20.70">
    <property type="entry name" value="Aldolase class I"/>
    <property type="match status" value="1"/>
</dbReference>
<dbReference type="HAMAP" id="MF_00279">
    <property type="entry name" value="PdxJ"/>
    <property type="match status" value="1"/>
</dbReference>
<dbReference type="InterPro" id="IPR013785">
    <property type="entry name" value="Aldolase_TIM"/>
</dbReference>
<dbReference type="InterPro" id="IPR004569">
    <property type="entry name" value="PyrdxlP_synth_PdxJ"/>
</dbReference>
<dbReference type="InterPro" id="IPR036130">
    <property type="entry name" value="Pyridoxine-5'_phos_synth"/>
</dbReference>
<dbReference type="NCBIfam" id="TIGR00559">
    <property type="entry name" value="pdxJ"/>
    <property type="match status" value="1"/>
</dbReference>
<dbReference type="NCBIfam" id="NF003623">
    <property type="entry name" value="PRK05265.1-1"/>
    <property type="match status" value="1"/>
</dbReference>
<dbReference type="NCBIfam" id="NF003625">
    <property type="entry name" value="PRK05265.1-3"/>
    <property type="match status" value="1"/>
</dbReference>
<dbReference type="NCBIfam" id="NF003627">
    <property type="entry name" value="PRK05265.1-5"/>
    <property type="match status" value="1"/>
</dbReference>
<dbReference type="PANTHER" id="PTHR30456">
    <property type="entry name" value="PYRIDOXINE 5'-PHOSPHATE SYNTHASE"/>
    <property type="match status" value="1"/>
</dbReference>
<dbReference type="PANTHER" id="PTHR30456:SF0">
    <property type="entry name" value="PYRIDOXINE 5'-PHOSPHATE SYNTHASE"/>
    <property type="match status" value="1"/>
</dbReference>
<dbReference type="Pfam" id="PF03740">
    <property type="entry name" value="PdxJ"/>
    <property type="match status" value="1"/>
</dbReference>
<dbReference type="SUPFAM" id="SSF63892">
    <property type="entry name" value="Pyridoxine 5'-phosphate synthase"/>
    <property type="match status" value="1"/>
</dbReference>
<feature type="chain" id="PRO_1000078812" description="Pyridoxine 5'-phosphate synthase">
    <location>
        <begin position="1"/>
        <end position="240"/>
    </location>
</feature>
<feature type="active site" description="Proton acceptor" evidence="1">
    <location>
        <position position="43"/>
    </location>
</feature>
<feature type="active site" description="Proton acceptor" evidence="1">
    <location>
        <position position="70"/>
    </location>
</feature>
<feature type="active site" description="Proton donor" evidence="1">
    <location>
        <position position="191"/>
    </location>
</feature>
<feature type="binding site" evidence="1">
    <location>
        <position position="7"/>
    </location>
    <ligand>
        <name>3-amino-2-oxopropyl phosphate</name>
        <dbReference type="ChEBI" id="CHEBI:57279"/>
    </ligand>
</feature>
<feature type="binding site" evidence="1">
    <location>
        <begin position="9"/>
        <end position="10"/>
    </location>
    <ligand>
        <name>1-deoxy-D-xylulose 5-phosphate</name>
        <dbReference type="ChEBI" id="CHEBI:57792"/>
    </ligand>
</feature>
<feature type="binding site" evidence="1">
    <location>
        <position position="18"/>
    </location>
    <ligand>
        <name>3-amino-2-oxopropyl phosphate</name>
        <dbReference type="ChEBI" id="CHEBI:57279"/>
    </ligand>
</feature>
<feature type="binding site" evidence="1">
    <location>
        <position position="45"/>
    </location>
    <ligand>
        <name>1-deoxy-D-xylulose 5-phosphate</name>
        <dbReference type="ChEBI" id="CHEBI:57792"/>
    </ligand>
</feature>
<feature type="binding site" evidence="1">
    <location>
        <position position="50"/>
    </location>
    <ligand>
        <name>1-deoxy-D-xylulose 5-phosphate</name>
        <dbReference type="ChEBI" id="CHEBI:57792"/>
    </ligand>
</feature>
<feature type="binding site" evidence="1">
    <location>
        <position position="100"/>
    </location>
    <ligand>
        <name>1-deoxy-D-xylulose 5-phosphate</name>
        <dbReference type="ChEBI" id="CHEBI:57792"/>
    </ligand>
</feature>
<feature type="binding site" evidence="1">
    <location>
        <position position="192"/>
    </location>
    <ligand>
        <name>3-amino-2-oxopropyl phosphate</name>
        <dbReference type="ChEBI" id="CHEBI:57279"/>
    </ligand>
</feature>
<feature type="binding site" evidence="1">
    <location>
        <begin position="213"/>
        <end position="214"/>
    </location>
    <ligand>
        <name>3-amino-2-oxopropyl phosphate</name>
        <dbReference type="ChEBI" id="CHEBI:57279"/>
    </ligand>
</feature>
<feature type="site" description="Transition state stabilizer" evidence="1">
    <location>
        <position position="151"/>
    </location>
</feature>
<proteinExistence type="inferred from homology"/>
<name>PDXJ_ACAM1</name>
<organism>
    <name type="scientific">Acaryochloris marina (strain MBIC 11017)</name>
    <dbReference type="NCBI Taxonomy" id="329726"/>
    <lineage>
        <taxon>Bacteria</taxon>
        <taxon>Bacillati</taxon>
        <taxon>Cyanobacteriota</taxon>
        <taxon>Cyanophyceae</taxon>
        <taxon>Acaryochloridales</taxon>
        <taxon>Acaryochloridaceae</taxon>
        <taxon>Acaryochloris</taxon>
    </lineage>
</organism>
<evidence type="ECO:0000255" key="1">
    <source>
        <dbReference type="HAMAP-Rule" id="MF_00279"/>
    </source>
</evidence>
<gene>
    <name evidence="1" type="primary">pdxJ</name>
    <name type="ordered locus">AM1_2758</name>
</gene>
<sequence>MPTLGVNIDHVATIRQARRTVEPDPVAAAVLAELAGADGITVHLREDRRHIQDRDVEVLRKTVRTHLNLEMAATAEMVEIALRIQPDYVTLVPEKREEVTTEGGLDVIGQQTHMADVVQTLQAANIPVSLFIDADAAQIEAAAQVQAKFIELHTGTYAEAKGEAQQTQELDVLKQGCDRAAALGLRVNAGHGLTYWNTYPVACLPGMEELNIGHTIISRSVLVGLERAVREMKDVIAGRG</sequence>